<feature type="chain" id="PRO_0000220036" description="Inactive protein-arginine deiminase type-6">
    <location>
        <begin position="1"/>
        <end position="694"/>
    </location>
</feature>
<feature type="modified residue" description="Phosphoserine" evidence="3">
    <location>
        <position position="10"/>
    </location>
</feature>
<feature type="modified residue" description="Phosphoserine" evidence="3">
    <location>
        <position position="446"/>
    </location>
</feature>
<feature type="sequence variant" id="VAR_090298" description="In OZEMA16." evidence="19">
    <original>T</original>
    <variation>P</variation>
    <location>
        <position position="120"/>
    </location>
</feature>
<feature type="sequence variant" id="VAR_090299" description="In OZEMA16." evidence="15">
    <original>R</original>
    <variation>C</variation>
    <location>
        <position position="132"/>
    </location>
</feature>
<feature type="sequence variant" id="VAR_090300" description="In OZEMA16." evidence="11">
    <original>C</original>
    <variation>R</variation>
    <location>
        <position position="163"/>
    </location>
</feature>
<feature type="sequence variant" id="VAR_078106" description="In OZEMA16; dbSNP:rs775156958." evidence="4 10">
    <original>H</original>
    <variation>Q</variation>
    <location>
        <position position="211"/>
    </location>
</feature>
<feature type="sequence variant" id="VAR_090301" description="In OZEMA16." evidence="10">
    <original>A</original>
    <variation>E</variation>
    <location>
        <position position="220"/>
    </location>
</feature>
<feature type="sequence variant" id="VAR_090302" description="In OZEMA16." evidence="4">
    <location>
        <begin position="324"/>
        <end position="694"/>
    </location>
</feature>
<feature type="sequence variant" id="VAR_090303" description="In OZEMA16." evidence="10">
    <original>S</original>
    <variation>R</variation>
    <location>
        <position position="336"/>
    </location>
</feature>
<feature type="sequence variant" id="VAR_090304" description="In OZEMA16." evidence="10">
    <original>R</original>
    <variation>C</variation>
    <location>
        <position position="352"/>
    </location>
</feature>
<feature type="sequence variant" id="VAR_090305" description="Found in patients with multi-locus imprinting disturbance." evidence="8">
    <original>T</original>
    <variation>A</variation>
    <location>
        <position position="372"/>
    </location>
</feature>
<feature type="sequence variant" id="VAR_090306" description="In OZEMA16; uncertain significance." evidence="6">
    <original>T</original>
    <variation>P</variation>
    <location>
        <position position="373"/>
    </location>
</feature>
<feature type="sequence variant" id="VAR_090307" description="In OZEMA16." evidence="4">
    <location>
        <begin position="381"/>
        <end position="694"/>
    </location>
</feature>
<feature type="sequence variant" id="VAR_090308" description="In OZEMA16." evidence="10 13">
    <original>I</original>
    <variation>T</variation>
    <location>
        <position position="416"/>
    </location>
</feature>
<feature type="sequence variant" id="VAR_090309" description="In OZEMA16." evidence="10">
    <original>P</original>
    <variation>L</variation>
    <location>
        <position position="433"/>
    </location>
</feature>
<feature type="sequence variant" id="VAR_090310" description="In OZEMA16." evidence="11">
    <location>
        <begin position="475"/>
        <end position="694"/>
    </location>
</feature>
<feature type="sequence variant" id="VAR_078107" description="In OZEMA16; dbSNP:rs1057517684." evidence="4 10">
    <original>G</original>
    <variation>R</variation>
    <location>
        <position position="540"/>
    </location>
</feature>
<feature type="sequence variant" id="VAR_090311" description="In OZEMA16; uncertain significance." evidence="6">
    <original>R</original>
    <variation>C</variation>
    <location>
        <position position="570"/>
    </location>
</feature>
<feature type="sequence variant" id="VAR_090312" description="In OZEMA16." evidence="10">
    <original>E</original>
    <variation>K</variation>
    <location>
        <position position="586"/>
    </location>
</feature>
<feature type="sequence variant" id="VAR_090313" description="In OZEMA16." evidence="10">
    <original>Q</original>
    <variation>K</variation>
    <location>
        <position position="589"/>
    </location>
</feature>
<feature type="sequence variant" id="VAR_090314" description="In OZEMA16; uncertain significance." evidence="5">
    <original>N</original>
    <variation>S</variation>
    <location>
        <position position="598"/>
    </location>
</feature>
<feature type="sequence variant" id="VAR_090315" description="In OZEMA16." evidence="14">
    <original>V</original>
    <variation>M</variation>
    <location>
        <position position="622"/>
    </location>
</feature>
<feature type="sequence variant" id="VAR_090316" description="Found in patients with multi-locus imprinting disturbance." evidence="7">
    <original>P</original>
    <variation>A</variation>
    <location>
        <position position="632"/>
    </location>
</feature>
<feature type="sequence variant" id="VAR_090317" description="In OZEMA16." evidence="10">
    <original>P</original>
    <variation>T</variation>
    <location>
        <position position="632"/>
    </location>
</feature>
<feature type="sequence variant" id="VAR_090318" description="In OZEMA16; uncertain significance." evidence="5">
    <original>R</original>
    <variation>Q</variation>
    <location>
        <position position="682"/>
    </location>
</feature>
<feature type="sequence variant" id="VAR_090319" description="In OZEMA16." evidence="19">
    <original>R</original>
    <variation>W</variation>
    <location>
        <position position="682"/>
    </location>
</feature>
<feature type="sequence variant" id="VAR_090320" description="Found in patients with multi-locus imprinting disturbance." evidence="8">
    <location>
        <begin position="690"/>
        <end position="694"/>
    </location>
</feature>
<feature type="sequence conflict" description="In Ref. 1; AAS07634." evidence="23" ref="1">
    <original>F</original>
    <variation>S</variation>
    <location>
        <position position="487"/>
    </location>
</feature>
<feature type="sequence conflict" description="In Ref. 1; AAS07634." evidence="23" ref="1">
    <original>K</original>
    <variation>N</variation>
    <location>
        <position position="517"/>
    </location>
</feature>
<feature type="sequence conflict" description="In Ref. 2; AAR38850." evidence="23" ref="2">
    <original>M</original>
    <variation>I</variation>
    <location>
        <position position="623"/>
    </location>
</feature>
<feature type="sequence conflict" description="In Ref. 2; AAR38850." evidence="23" ref="2">
    <original>A</original>
    <variation>T</variation>
    <location>
        <position position="686"/>
    </location>
</feature>
<feature type="strand" evidence="26">
    <location>
        <begin position="12"/>
        <end position="16"/>
    </location>
</feature>
<feature type="strand" evidence="26">
    <location>
        <begin position="19"/>
        <end position="21"/>
    </location>
</feature>
<feature type="strand" evidence="26">
    <location>
        <begin position="23"/>
        <end position="28"/>
    </location>
</feature>
<feature type="strand" evidence="26">
    <location>
        <begin position="33"/>
        <end position="36"/>
    </location>
</feature>
<feature type="strand" evidence="26">
    <location>
        <begin position="47"/>
        <end position="52"/>
    </location>
</feature>
<feature type="strand" evidence="26">
    <location>
        <begin position="56"/>
        <end position="60"/>
    </location>
</feature>
<feature type="strand" evidence="26">
    <location>
        <begin position="74"/>
        <end position="76"/>
    </location>
</feature>
<feature type="strand" evidence="26">
    <location>
        <begin position="82"/>
        <end position="89"/>
    </location>
</feature>
<feature type="strand" evidence="26">
    <location>
        <begin position="97"/>
        <end position="104"/>
    </location>
</feature>
<feature type="strand" evidence="26">
    <location>
        <begin position="113"/>
        <end position="127"/>
    </location>
</feature>
<feature type="strand" evidence="26">
    <location>
        <begin position="132"/>
        <end position="135"/>
    </location>
</feature>
<feature type="helix" evidence="26">
    <location>
        <begin position="144"/>
        <end position="146"/>
    </location>
</feature>
<feature type="strand" evidence="26">
    <location>
        <begin position="157"/>
        <end position="159"/>
    </location>
</feature>
<feature type="helix" evidence="26">
    <location>
        <begin position="165"/>
        <end position="167"/>
    </location>
</feature>
<feature type="strand" evidence="26">
    <location>
        <begin position="178"/>
        <end position="180"/>
    </location>
</feature>
<feature type="turn" evidence="26">
    <location>
        <begin position="183"/>
        <end position="185"/>
    </location>
</feature>
<feature type="helix" evidence="26">
    <location>
        <begin position="186"/>
        <end position="188"/>
    </location>
</feature>
<feature type="strand" evidence="26">
    <location>
        <begin position="189"/>
        <end position="198"/>
    </location>
</feature>
<feature type="helix" evidence="26">
    <location>
        <begin position="200"/>
        <end position="203"/>
    </location>
</feature>
<feature type="strand" evidence="26">
    <location>
        <begin position="206"/>
        <end position="211"/>
    </location>
</feature>
<feature type="helix" evidence="26">
    <location>
        <begin position="214"/>
        <end position="217"/>
    </location>
</feature>
<feature type="strand" evidence="26">
    <location>
        <begin position="220"/>
        <end position="225"/>
    </location>
</feature>
<feature type="strand" evidence="26">
    <location>
        <begin position="232"/>
        <end position="238"/>
    </location>
</feature>
<feature type="strand" evidence="26">
    <location>
        <begin position="241"/>
        <end position="247"/>
    </location>
</feature>
<feature type="strand" evidence="26">
    <location>
        <begin position="250"/>
        <end position="263"/>
    </location>
</feature>
<feature type="strand" evidence="26">
    <location>
        <begin position="271"/>
        <end position="281"/>
    </location>
</feature>
<feature type="strand" evidence="26">
    <location>
        <begin position="291"/>
        <end position="302"/>
    </location>
</feature>
<feature type="strand" evidence="26">
    <location>
        <begin position="314"/>
        <end position="320"/>
    </location>
</feature>
<feature type="helix" evidence="26">
    <location>
        <begin position="328"/>
        <end position="338"/>
    </location>
</feature>
<feature type="strand" evidence="26">
    <location>
        <begin position="342"/>
        <end position="346"/>
    </location>
</feature>
<feature type="helix" evidence="26">
    <location>
        <begin position="356"/>
        <end position="359"/>
    </location>
</feature>
<feature type="strand" evidence="26">
    <location>
        <begin position="360"/>
        <end position="368"/>
    </location>
</feature>
<feature type="strand" evidence="26">
    <location>
        <begin position="371"/>
        <end position="378"/>
    </location>
</feature>
<feature type="strand" evidence="26">
    <location>
        <begin position="382"/>
        <end position="384"/>
    </location>
</feature>
<feature type="helix" evidence="26">
    <location>
        <begin position="389"/>
        <end position="392"/>
    </location>
</feature>
<feature type="strand" evidence="26">
    <location>
        <begin position="399"/>
        <end position="402"/>
    </location>
</feature>
<feature type="strand" evidence="26">
    <location>
        <begin position="418"/>
        <end position="421"/>
    </location>
</feature>
<feature type="strand" evidence="26">
    <location>
        <begin position="425"/>
        <end position="427"/>
    </location>
</feature>
<feature type="strand" evidence="26">
    <location>
        <begin position="430"/>
        <end position="432"/>
    </location>
</feature>
<feature type="strand" evidence="26">
    <location>
        <begin position="437"/>
        <end position="441"/>
    </location>
</feature>
<feature type="helix" evidence="26">
    <location>
        <begin position="454"/>
        <end position="462"/>
    </location>
</feature>
<feature type="strand" evidence="26">
    <location>
        <begin position="469"/>
        <end position="472"/>
    </location>
</feature>
<feature type="helix" evidence="26">
    <location>
        <begin position="481"/>
        <end position="483"/>
    </location>
</feature>
<feature type="strand" evidence="26">
    <location>
        <begin position="485"/>
        <end position="489"/>
    </location>
</feature>
<feature type="strand" evidence="26">
    <location>
        <begin position="499"/>
        <end position="506"/>
    </location>
</feature>
<feature type="helix" evidence="26">
    <location>
        <begin position="507"/>
        <end position="519"/>
    </location>
</feature>
<feature type="turn" evidence="26">
    <location>
        <begin position="520"/>
        <end position="524"/>
    </location>
</feature>
<feature type="turn" evidence="26">
    <location>
        <begin position="528"/>
        <end position="530"/>
    </location>
</feature>
<feature type="helix" evidence="26">
    <location>
        <begin position="533"/>
        <end position="538"/>
    </location>
</feature>
<feature type="helix" evidence="26">
    <location>
        <begin position="546"/>
        <end position="550"/>
    </location>
</feature>
<feature type="helix" evidence="26">
    <location>
        <begin position="553"/>
        <end position="577"/>
    </location>
</feature>
<feature type="helix" evidence="26">
    <location>
        <begin position="581"/>
        <end position="583"/>
    </location>
</feature>
<feature type="strand" evidence="26">
    <location>
        <begin position="584"/>
        <end position="588"/>
    </location>
</feature>
<feature type="strand" evidence="26">
    <location>
        <begin position="591"/>
        <end position="594"/>
    </location>
</feature>
<feature type="strand" evidence="26">
    <location>
        <begin position="609"/>
        <end position="614"/>
    </location>
</feature>
<feature type="strand" evidence="26">
    <location>
        <begin position="621"/>
        <end position="623"/>
    </location>
</feature>
<feature type="strand" evidence="26">
    <location>
        <begin position="626"/>
        <end position="630"/>
    </location>
</feature>
<feature type="helix" evidence="26">
    <location>
        <begin position="642"/>
        <end position="651"/>
    </location>
</feature>
<feature type="helix" evidence="26">
    <location>
        <begin position="652"/>
        <end position="654"/>
    </location>
</feature>
<feature type="strand" evidence="26">
    <location>
        <begin position="657"/>
        <end position="661"/>
    </location>
</feature>
<feature type="helix" evidence="26">
    <location>
        <begin position="664"/>
        <end position="667"/>
    </location>
</feature>
<feature type="strand" evidence="26">
    <location>
        <begin position="677"/>
        <end position="682"/>
    </location>
</feature>
<feature type="helix" evidence="26">
    <location>
        <begin position="689"/>
        <end position="691"/>
    </location>
</feature>
<comment type="function">
    <text evidence="16 17 18">Structural constituent of cytoplasmic lattices, which plays a key role in early embryonic development (PubMed:37922900). Cytoplasmic lattices consist in fibrous structures found in the cytoplasm of oocytes and preimplantation embryos (PubMed:37922900). They are required to store maternal proteins critical for embryonic development, such as ribosomal proteins and proteins that control epigenetic reprogramming of the preimplantation embryo, and prevent their degradation or activation (PubMed:37922900). In contrast to other members of the family, does not show protein-arginine deiminase activity due to its inability to bind Ca(2+) (PubMed:38656308, PubMed:39286527).</text>
</comment>
<comment type="subunit">
    <text evidence="1 17 18">Homodimers (PubMed:38656308, PubMed:39286527). Associates with alpha-tubulin (By similarity).</text>
</comment>
<comment type="interaction">
    <interactant intactId="EBI-10892722">
        <id>Q6TGC4</id>
    </interactant>
    <interactant intactId="EBI-742054">
        <id>Q96D03</id>
        <label>DDIT4L</label>
    </interactant>
    <organismsDiffer>false</organismsDiffer>
    <experiments>3</experiments>
</comment>
<comment type="interaction">
    <interactant intactId="EBI-10892722">
        <id>Q6TGC4</id>
    </interactant>
    <interactant intactId="EBI-746999">
        <id>O95198</id>
        <label>KLHL2</label>
    </interactant>
    <organismsDiffer>false</organismsDiffer>
    <experiments>3</experiments>
</comment>
<comment type="interaction">
    <interactant intactId="EBI-10892722">
        <id>Q6TGC4</id>
    </interactant>
    <interactant intactId="EBI-349968">
        <id>O43463</id>
        <label>SUV39H1</label>
    </interactant>
    <organismsDiffer>false</organismsDiffer>
    <experiments>3</experiments>
</comment>
<comment type="interaction">
    <interactant intactId="EBI-10892722">
        <id>Q6TGC4</id>
    </interactant>
    <interactant intactId="EBI-11035148">
        <id>Q8TF50</id>
        <label>ZNF526</label>
    </interactant>
    <organismsDiffer>false</organismsDiffer>
    <experiments>3</experiments>
</comment>
<comment type="subcellular location">
    <subcellularLocation>
        <location evidence="4 16">Cytoplasm</location>
    </subcellularLocation>
    <subcellularLocation>
        <location evidence="1">Cytoplasmic vesicle</location>
        <location evidence="1">Secretory vesicle</location>
        <location evidence="1">Cortical granule</location>
    </subcellularLocation>
    <subcellularLocation>
        <location evidence="1">Nucleus</location>
    </subcellularLocation>
    <text evidence="1 16">Core component of cytoplasmic lattices in oocytes (PubMed:37922900). Also nuclear (By similarity).</text>
</comment>
<comment type="tissue specificity">
    <text evidence="2 4">Highly expressed in oocytes and weakly expressed in other somatic tissues.</text>
</comment>
<comment type="PTM">
    <text evidence="3">Phosphorylation at Ser-10, possibly by RSK-type kinases, and Ser-446 creates binding sites for 14-3-3 proteins.</text>
</comment>
<comment type="disease" evidence="4 5 6 9 10 11 12 13 14 15 19">
    <disease id="DI-04914">
        <name>Oocyte/zygote/embryo maturation arrest 16</name>
        <acronym>OZEMA16</acronym>
        <description>A rare cause of female primary infertility. In affected women, ovulation and fertilization proceed normally but embryos are arrested at early stages of development. Inheritance is autosomal recessive.</description>
        <dbReference type="MIM" id="617234"/>
    </disease>
    <text>The disease is caused by variants affecting the gene represented in this entry.</text>
</comment>
<comment type="disease">
    <text evidence="7 8">PADI6 variants have been found in a spectrum of phenotypes characterized by aberrant methylation of multiple imprinted loci, a condition known as multi-locus imprinting defect or multi-locus imprinting disturbance (MLID) (PubMed:32928291, PubMed:33221824). MLID-related phenotype spectrum ranges from intrauterine death to different types of imprinting disorders, including Beckwith-Wiedemann syndrome (BWS), Silver-Russell syndrome (SRS), and non-specific developmental and behavioral manifestations (PubMed:32928291, PubMed:33221824).</text>
</comment>
<comment type="similarity">
    <text evidence="23">Belongs to the protein arginine deiminase family.</text>
</comment>
<comment type="caution">
    <text evidence="17 18">In contrast to other members of the family, does not bind Ca(2+) and is inactive in in vitro assays against standard PADIs substrate (PubMed:39286527). At the structural level, the putative active site is in an unsuitable conformation for substrate binding (PubMed:38656308, PubMed:39286527).</text>
</comment>
<protein>
    <recommendedName>
        <fullName evidence="23">Inactive protein-arginine deiminase type-6</fullName>
    </recommendedName>
    <alternativeName>
        <fullName>Peptidyl arginine deiminase-like protein</fullName>
    </alternativeName>
    <alternativeName>
        <fullName evidence="21">Peptidylarginine deiminase VI</fullName>
        <shortName evidence="21">hPADVI</shortName>
    </alternativeName>
    <alternativeName>
        <fullName>Protein-arginine deiminase type VI</fullName>
    </alternativeName>
    <alternativeName>
        <fullName>Protein-arginine deiminase type-6</fullName>
    </alternativeName>
</protein>
<keyword id="KW-0002">3D-structure</keyword>
<keyword id="KW-0963">Cytoplasm</keyword>
<keyword id="KW-0968">Cytoplasmic vesicle</keyword>
<keyword id="KW-0225">Disease variant</keyword>
<keyword id="KW-0539">Nucleus</keyword>
<keyword id="KW-0597">Phosphoprotein</keyword>
<keyword id="KW-1267">Proteomics identification</keyword>
<keyword id="KW-1185">Reference proteome</keyword>
<organism>
    <name type="scientific">Homo sapiens</name>
    <name type="common">Human</name>
    <dbReference type="NCBI Taxonomy" id="9606"/>
    <lineage>
        <taxon>Eukaryota</taxon>
        <taxon>Metazoa</taxon>
        <taxon>Chordata</taxon>
        <taxon>Craniata</taxon>
        <taxon>Vertebrata</taxon>
        <taxon>Euteleostomi</taxon>
        <taxon>Mammalia</taxon>
        <taxon>Eutheria</taxon>
        <taxon>Euarchontoglires</taxon>
        <taxon>Primates</taxon>
        <taxon>Haplorrhini</taxon>
        <taxon>Catarrhini</taxon>
        <taxon>Hominidae</taxon>
        <taxon>Homo</taxon>
    </lineage>
</organism>
<accession>Q6TGC4</accession>
<accession>Q330K5</accession>
<accession>Q70SX3</accession>
<proteinExistence type="evidence at protein level"/>
<gene>
    <name evidence="20 24" type="primary">PADI6</name>
    <name evidence="22" type="synonym">PAD6</name>
</gene>
<sequence length="694" mass="77727">MVSVEGRAMSFQSIIHLSLDSPVHAVCVLGTEICLDLSGCAPQKCQCFTIHGSGRVLIDVANTVISEKEDATIWWPLSDPTYATVKMTSPSPSVDADKVSVTYYGPNEDAPVGTAVLYLTGIEVSLEVDIYRNGQVEMSSDKQAKKKWIWGPSGWGAILLVNCNPADVGQQLEDKKTKKVIFSEEITNLSQMTLNVQGPSCILKKYRLVLHTSKEESKKARVYWPQKDNSSTFELVLGPDQHAYTLALLGNHLKETFYVEAIAFPSAEFSGLISYSVSLVEESQDPSIPETVLYKDTVVFRVAPCVFIPCTQVPLEVYLCRELQLQGFVDTVTKLSEKSNSQVASVYEDPNRLGRWLQDEMAFCYTQAPHKTTSLILDTPQAADLDEFPMKYSLSPGIGYMIQDTEDHKVASMDSIGNLMVSPPVKVQGKEYPLGRVLIGSSFYPSAEGRAMSKTLRDFLYAQQVQAPVELYSDWLMTGHVDEFMCFIPTDDKNEGKKGFLLLLASPSACYKLFREKQKEGYGDALLFDELRADQLLSNGREAKTIDQLLADESLKKQNEYVEKCIHLNRDILKTELGLVEQDIIEIPQLFCLEKLTNIPSDQQPKRSFARPYFPDLLRMIVMGKNLGIPKPFGPQIKGTCCLEEKICCLLEPLGFKCTFINDFDCYLTEVGDICACANIRRVPFAFKWWKMVP</sequence>
<reference key="1">
    <citation type="journal article" date="2004" name="Acta Biochim. Pol.">
        <title>cDNA cloning, gene organization and expression analysis of human peptidylarginine deiminase type VI.</title>
        <authorList>
            <person name="Zhang J."/>
            <person name="Dai J."/>
            <person name="Zhao E."/>
            <person name="Lin Y."/>
            <person name="Zeng L."/>
            <person name="Chen J."/>
            <person name="Zheng H."/>
            <person name="Wang Y."/>
            <person name="Li X."/>
            <person name="Ying K."/>
            <person name="Xie Y."/>
            <person name="Mao Y."/>
        </authorList>
    </citation>
    <scope>NUCLEOTIDE SEQUENCE [MRNA]</scope>
    <scope>TISSUE SPECIFICITY</scope>
    <source>
        <tissue>Fetal brain</tissue>
    </source>
</reference>
<reference key="2">
    <citation type="journal article" date="2004" name="Gene">
        <title>Comparative analysis of the mouse and human peptidylarginine deiminase gene clusters reveals highly conserved non-coding segments and a new human gene, PADI6.</title>
        <authorList>
            <person name="Chavanas S."/>
            <person name="Mechin M.-C."/>
            <person name="Takahara H."/>
            <person name="Kawada A."/>
            <person name="Nachat R."/>
            <person name="Serre G."/>
            <person name="Simon M."/>
        </authorList>
    </citation>
    <scope>NUCLEOTIDE SEQUENCE [GENOMIC DNA / MRNA]</scope>
    <source>
        <tissue>Ovary</tissue>
    </source>
</reference>
<reference key="3">
    <citation type="journal article" date="2012" name="J. Struct. Biol.">
        <title>Identification and structural characterization of two 14-3-3 binding sites in the human peptidylarginine deiminase type VI.</title>
        <authorList>
            <person name="Rose R."/>
            <person name="Rose M."/>
            <person name="Ottmann C."/>
        </authorList>
    </citation>
    <scope>X-RAY CRYSTALLOGRAPHY (2.0 ANGSTROMS) OF 1-13 IN COMPLEX WITH SFN</scope>
    <scope>X-RAY CRYSTALLOGRAPHY (1.4 ANGSTROMS) OF 441-449 IN COMPLEX WITH SFN</scope>
    <scope>PHOSPHORYLATION AT SER-10 AND SER-446</scope>
</reference>
<reference key="4">
    <citation type="journal article" date="2016" name="Am. J. Hum. Genet.">
        <title>Mutations in PADI6 cause female infertility characterized by early embryonic arrest.</title>
        <authorList>
            <person name="Xu Y."/>
            <person name="Shi Y."/>
            <person name="Fu J."/>
            <person name="Yu M."/>
            <person name="Feng R."/>
            <person name="Sang Q."/>
            <person name="Liang B."/>
            <person name="Chen B."/>
            <person name="Qu R."/>
            <person name="Li B."/>
            <person name="Yan Z."/>
            <person name="Mao X."/>
            <person name="Kuang Y."/>
            <person name="Jin L."/>
            <person name="He L."/>
            <person name="Sun X."/>
            <person name="Wang L."/>
        </authorList>
    </citation>
    <scope>TISSUE SPECIFICITY</scope>
    <scope>SUBCELLULAR LOCATION</scope>
    <scope>INVOLVEMENT IN OZEMA16</scope>
    <scope>VARIANTS OZEMA16 GLN-211; 324-GLN--PRO-694 DEL; 381-GLN--PRO-694 DEL AND ARG-540</scope>
</reference>
<reference key="5">
    <citation type="journal article" date="2023" name="Cell">
        <title>Mammalian oocytes store proteins for the early embryo on cytoplasmic lattices.</title>
        <authorList>
            <person name="Jentoft I.M.A."/>
            <person name="Baeuerlein F.J.B."/>
            <person name="Welp L.M."/>
            <person name="Cooper B.H."/>
            <person name="Petrovic A."/>
            <person name="So C."/>
            <person name="Penir S.M."/>
            <person name="Politi A.Z."/>
            <person name="Horokhovskyi Y."/>
            <person name="Takala I."/>
            <person name="Eckel H."/>
            <person name="Moltrecht R."/>
            <person name="Lenart P."/>
            <person name="Cavazza T."/>
            <person name="Liepe J."/>
            <person name="Brose N."/>
            <person name="Urlaub H."/>
            <person name="Fernandez-Busnadiego R."/>
            <person name="Schuh M."/>
        </authorList>
    </citation>
    <scope>FUNCTION</scope>
    <scope>SUBCELLULAR LOCATION</scope>
</reference>
<reference key="6">
    <citation type="journal article" date="2024" name="Comput. Struct. Biotechnol. J.">
        <title>Structural insight into the function of human peptidyl arginine deiminase 6.</title>
        <authorList>
            <person name="Williams J.P.C."/>
            <person name="Mouilleron S."/>
            <person name="Trapero R.H."/>
            <person name="Bertran M.T."/>
            <person name="Marsh J.A."/>
            <person name="Walport L.J."/>
        </authorList>
    </citation>
    <scope>X-RAY CRYSTALLOGRAPHY (2.44 ANGSTROMS) OF 1-294</scope>
    <scope>SUBUNIT</scope>
    <scope>FUNCTION</scope>
    <scope>ABSENCE OF CATALYTIC ACTIVITY</scope>
</reference>
<reference evidence="25" key="7">
    <citation type="journal article" date="2024" name="IUCrJ">
        <title>Crystal structure of human peptidylarginine deiminase type VI (PAD6) provides insights into its inactivity.</title>
        <authorList>
            <person name="Ranaivoson F.M."/>
            <person name="Bande R."/>
            <person name="Cardaun I."/>
            <person name="De Riso A."/>
            <person name="Gartner A."/>
            <person name="Loke P."/>
            <person name="Reinisch C."/>
            <person name="Vogirala P."/>
            <person name="Beaumont E."/>
        </authorList>
    </citation>
    <scope>X-RAY CRYSTALLOGRAPHY (1.68 ANGSTROMS) OF 2-694 MUTANT GLU-10/GLU-446</scope>
    <scope>FUNCTION</scope>
    <scope>ABSENCE OF CATALYTIC ACTIVITY</scope>
</reference>
<reference key="8">
    <citation type="journal article" date="2018" name="Eur. J. Hum. Genet.">
        <title>Biallelic PADI6 variants linking infertility, miscarriages, and hydatidiform moles.</title>
        <authorList>
            <person name="Qian J."/>
            <person name="Nguyen N.M.P."/>
            <person name="Rezaei M."/>
            <person name="Huang B."/>
            <person name="Tao Y."/>
            <person name="Zhang X."/>
            <person name="Cheng Q."/>
            <person name="Yang H."/>
            <person name="Asangla A."/>
            <person name="Majewski J."/>
            <person name="Slim R."/>
        </authorList>
    </citation>
    <scope>VARIANTS OZEMA16 SER-598 AND GLN-682</scope>
</reference>
<reference key="9">
    <citation type="journal article" date="2020" name="Clin. Epigenetics">
        <title>Loss-of-function maternal-effect mutations of PADI6 are associated with familial and sporadic Beckwith-Wiedemann syndrome with multi-locus imprinting disturbance.</title>
        <authorList>
            <person name="Cubellis M.V."/>
            <person name="Pignata L."/>
            <person name="Verma A."/>
            <person name="Sparago A."/>
            <person name="Del Prete R."/>
            <person name="Monticelli M."/>
            <person name="Calzari L."/>
            <person name="Antona V."/>
            <person name="Melis D."/>
            <person name="Tenconi R."/>
            <person name="Russo S."/>
            <person name="Cerrato F."/>
            <person name="Riccio A."/>
        </authorList>
    </citation>
    <scope>INVOLVEMENT IN MULTI-LOCUS IMPRINTING DISTURBANCE</scope>
    <scope>VARIANT ALA-632</scope>
</reference>
<reference key="10">
    <citation type="journal article" date="2020" name="J. Assist. Reprod. Genet.">
        <title>New biallelic mutations in PADI6 cause recurrent preimplantation embryonic arrest characterized by direct cleavage.</title>
        <authorList>
            <person name="Zheng W."/>
            <person name="Chen L."/>
            <person name="Dai J."/>
            <person name="Dai C."/>
            <person name="Guo J."/>
            <person name="Lu C."/>
            <person name="Gong F."/>
            <person name="Lu G."/>
            <person name="Lin G."/>
        </authorList>
    </citation>
    <scope>VARIANTS OZEMA16 PRO-373 AND CYS-570</scope>
</reference>
<reference key="11">
    <citation type="journal article" date="2021" name="J. Assist. Reprod. Genet.">
        <title>Two novel mutations in PADI6 and TLE6 genes cause female infertility due to arrest in embryonic development.</title>
        <authorList>
            <person name="Liu J."/>
            <person name="Tan Z."/>
            <person name="He J."/>
            <person name="Jin T."/>
            <person name="Han Y."/>
            <person name="Hu L."/>
            <person name="Huang S."/>
        </authorList>
    </citation>
    <scope>INVOLVEMENT IN OZEMA16</scope>
</reference>
<reference key="12">
    <citation type="journal article" date="2021" name="Eur. J. Hum. Genet.">
        <title>Biallelic PADI6 variants cause multilocus imprinting disturbances and miscarriages in the same family.</title>
        <authorList>
            <person name="Eggermann T."/>
            <person name="Kadgien G."/>
            <person name="Begemann M."/>
            <person name="Elbracht M."/>
        </authorList>
    </citation>
    <scope>INVOLVEMENT IN MULTI-LOCUS IMPRINTING DISTURBANCE</scope>
    <scope>VARIANTS ALA-372 AND 690-TRP--PRO-694 DEL</scope>
</reference>
<reference key="13">
    <citation type="journal article" date="2022" name="Front. Cell Dev. Biol.">
        <title>Novel Homozygous PADI6 Variants in Infertile Females with Early Embryonic Arrest.</title>
        <authorList>
            <person name="Xu Y."/>
            <person name="Wang R."/>
            <person name="Pang Z."/>
            <person name="Wei Z."/>
            <person name="Sun L."/>
            <person name="Li S."/>
            <person name="Wang G."/>
            <person name="Liu Y."/>
            <person name="Zhou Y."/>
            <person name="Ye H."/>
            <person name="Jin L."/>
            <person name="Xue S."/>
        </authorList>
    </citation>
    <scope>VARIANTS OZEMA16 ARG-163 AND 475-TRP--PRO-694 DEL</scope>
</reference>
<reference key="14">
    <citation type="journal article" date="2022" name="Front. Genet.">
        <title>A complex heterozygous mutation in PADI6 causes early embryo arrest: A case report.</title>
        <authorList>
            <person name="Zhang T."/>
            <person name="Liu P."/>
            <person name="Yao G."/>
            <person name="Zhang X."/>
            <person name="Cao C."/>
        </authorList>
    </citation>
    <scope>VARIANT OZEMA16 THR-416</scope>
</reference>
<reference key="15">
    <citation type="journal article" date="2022" name="J. Hum. Genet.">
        <title>Novel biallelic mutations in PADI6 in patients with early embryonic arrest.</title>
        <authorList>
            <person name="Dong J."/>
            <person name="Fu J."/>
            <person name="Yan Z."/>
            <person name="Li L."/>
            <person name="Qiu Y."/>
            <person name="Zeng Y."/>
            <person name="Liu R."/>
            <person name="Chen B."/>
            <person name="Shi R."/>
            <person name="Diao F."/>
            <person name="Wang L."/>
            <person name="Shi Q."/>
            <person name="Sang Q."/>
        </authorList>
    </citation>
    <scope>VARIANTS OZEMA16 GLN-211; GLU-220; ARG-336; CYS-352; THR-416; LEU-433; ARG-540; LYS-586; LYS-589 AND THR-632</scope>
</reference>
<reference key="16">
    <citation type="journal article" date="2022" name="Reprod. Health">
        <title>A novel homozygous mutation in the PADI6 gene causes early embryo arrest.</title>
        <authorList>
            <person name="Wang X."/>
            <person name="Zhu H."/>
            <person name="He Y."/>
            <person name="Zeng J."/>
            <person name="Zhao J."/>
            <person name="Xia Q."/>
            <person name="Wu L."/>
            <person name="Yao Z."/>
            <person name="Li Y."/>
        </authorList>
    </citation>
    <scope>INVOLVEMENT IN OZEMA16</scope>
</reference>
<reference key="17">
    <citation type="journal article" date="2023" name="Front. Genet.">
        <title>A novel homozygous variant in PADI6 is associate with human cleavage-stage embryonic arrest.</title>
        <authorList>
            <person name="Cao G."/>
            <person name="Zhu X."/>
            <person name="Lin Y."/>
            <person name="Fang J."/>
            <person name="Shen X."/>
            <person name="Wang S."/>
            <person name="Kong N."/>
        </authorList>
    </citation>
    <scope>VARIANT OZEMA16 CYS-132</scope>
</reference>
<reference key="18">
    <citation type="journal article" date="2023" name="QJM">
        <title>Case report: human early embryonic arrest in a consanguineous Chinese family caused by a novel missense variant of PADI6.</title>
        <authorList>
            <person name="Zhang M."/>
            <person name="Bi X."/>
            <person name="Ge B."/>
            <person name="Wei H."/>
            <person name="Gong L."/>
            <person name="Wang J."/>
            <person name="Wang B."/>
        </authorList>
    </citation>
    <scope>VARIANT OZEMA16 MET-622</scope>
</reference>
<reference key="19">
    <citation type="journal article" date="2024" name="J. Assist. Reprod. Genet.">
        <title>Novel variants in PADI6 genes cause female infertility due to early embryo arrest.</title>
        <authorList>
            <person name="Zhou J."/>
            <person name="Mao R."/>
            <person name="Gao L."/>
            <person name="Wang M."/>
            <person name="Long R."/>
            <person name="Wang X."/>
            <person name="Li Z."/>
            <person name="Jin L."/>
            <person name="Zhu L."/>
        </authorList>
    </citation>
    <scope>VARIANTS OZEMA16 PRO-120 AND TRP-682</scope>
</reference>
<dbReference type="EMBL" id="AY443100">
    <property type="protein sequence ID" value="AAS07634.1"/>
    <property type="molecule type" value="mRNA"/>
</dbReference>
<dbReference type="EMBL" id="AY422079">
    <property type="protein sequence ID" value="AAR38850.1"/>
    <property type="molecule type" value="mRNA"/>
</dbReference>
<dbReference type="EMBL" id="AJ549502">
    <property type="protein sequence ID" value="CAD70706.1"/>
    <property type="molecule type" value="Genomic_DNA"/>
</dbReference>
<dbReference type="CCDS" id="CCDS72715.1"/>
<dbReference type="RefSeq" id="NP_997304.3">
    <property type="nucleotide sequence ID" value="NM_207421.4"/>
</dbReference>
<dbReference type="PDB" id="4DAT">
    <property type="method" value="X-ray"/>
    <property type="resolution" value="1.40 A"/>
    <property type="chains" value="B=441-449"/>
</dbReference>
<dbReference type="PDB" id="4DAU">
    <property type="method" value="X-ray"/>
    <property type="resolution" value="2.00 A"/>
    <property type="chains" value="B=1-13"/>
</dbReference>
<dbReference type="PDB" id="8QL0">
    <property type="method" value="X-ray"/>
    <property type="resolution" value="1.68 A"/>
    <property type="chains" value="A=2-694"/>
</dbReference>
<dbReference type="PDB" id="9FMN">
    <property type="method" value="X-ray"/>
    <property type="resolution" value="2.44 A"/>
    <property type="chains" value="A=1-694"/>
</dbReference>
<dbReference type="PDBsum" id="4DAT"/>
<dbReference type="PDBsum" id="4DAU"/>
<dbReference type="PDBsum" id="8QL0"/>
<dbReference type="PDBsum" id="9FMN"/>
<dbReference type="SMR" id="Q6TGC4"/>
<dbReference type="BioGRID" id="131667">
    <property type="interactions" value="16"/>
</dbReference>
<dbReference type="ComplexPortal" id="CPX-2210">
    <property type="entry name" value="Subcortical maternal complex"/>
</dbReference>
<dbReference type="ELM" id="Q6TGC4"/>
<dbReference type="FunCoup" id="Q6TGC4">
    <property type="interactions" value="20"/>
</dbReference>
<dbReference type="IntAct" id="Q6TGC4">
    <property type="interactions" value="16"/>
</dbReference>
<dbReference type="STRING" id="9606.ENSP00000483125"/>
<dbReference type="BindingDB" id="Q6TGC4"/>
<dbReference type="ChEMBL" id="CHEMBL3638347"/>
<dbReference type="DrugBank" id="DB00155">
    <property type="generic name" value="Citrulline"/>
</dbReference>
<dbReference type="GlyGen" id="Q6TGC4">
    <property type="glycosylation" value="1 site, 1 O-linked glycan (1 site)"/>
</dbReference>
<dbReference type="iPTMnet" id="Q6TGC4"/>
<dbReference type="PhosphoSitePlus" id="Q6TGC4"/>
<dbReference type="BioMuta" id="PADI6"/>
<dbReference type="DMDM" id="408360253"/>
<dbReference type="jPOST" id="Q6TGC4"/>
<dbReference type="MassIVE" id="Q6TGC4"/>
<dbReference type="PaxDb" id="9606-ENSP00000483125"/>
<dbReference type="PeptideAtlas" id="Q6TGC4"/>
<dbReference type="ProteomicsDB" id="67394"/>
<dbReference type="Antibodypedia" id="73123">
    <property type="antibodies" value="81 antibodies from 12 providers"/>
</dbReference>
<dbReference type="DNASU" id="353238"/>
<dbReference type="Ensembl" id="ENST00000619609.1">
    <property type="protein sequence ID" value="ENSP00000483125.1"/>
    <property type="gene ID" value="ENSG00000276747.1"/>
</dbReference>
<dbReference type="Ensembl" id="ENST00000625380.1">
    <property type="protein sequence ID" value="ENSP00000485805.1"/>
    <property type="gene ID" value="ENSG00000280949.1"/>
</dbReference>
<dbReference type="GeneID" id="353238"/>
<dbReference type="KEGG" id="hsa:353238"/>
<dbReference type="MANE-Select" id="ENST00000619609.1">
    <property type="protein sequence ID" value="ENSP00000483125.1"/>
    <property type="RefSeq nucleotide sequence ID" value="NM_207421.4"/>
    <property type="RefSeq protein sequence ID" value="NP_997304.3"/>
</dbReference>
<dbReference type="UCSC" id="uc031trf.2">
    <property type="organism name" value="human"/>
</dbReference>
<dbReference type="AGR" id="HGNC:20449"/>
<dbReference type="CTD" id="353238"/>
<dbReference type="DisGeNET" id="353238"/>
<dbReference type="GeneCards" id="PADI6"/>
<dbReference type="HGNC" id="HGNC:20449">
    <property type="gene designation" value="PADI6"/>
</dbReference>
<dbReference type="HPA" id="ENSG00000276747">
    <property type="expression patterns" value="Tissue enriched (ovary)"/>
</dbReference>
<dbReference type="MalaCards" id="PADI6"/>
<dbReference type="MIM" id="610363">
    <property type="type" value="gene"/>
</dbReference>
<dbReference type="MIM" id="617234">
    <property type="type" value="phenotype"/>
</dbReference>
<dbReference type="neXtProt" id="NX_Q6TGC4"/>
<dbReference type="OpenTargets" id="ENSG00000276747"/>
<dbReference type="PharmGKB" id="PA134975206"/>
<dbReference type="VEuPathDB" id="HostDB:ENSG00000276747"/>
<dbReference type="eggNOG" id="ENOG502QVJA">
    <property type="taxonomic scope" value="Eukaryota"/>
</dbReference>
<dbReference type="GeneTree" id="ENSGT00940000153217"/>
<dbReference type="HOGENOM" id="CLU_021911_0_0_1"/>
<dbReference type="InParanoid" id="Q6TGC4"/>
<dbReference type="OMA" id="VAPCIFT"/>
<dbReference type="OrthoDB" id="5102063at2759"/>
<dbReference type="PAN-GO" id="Q6TGC4">
    <property type="GO annotations" value="4 GO annotations based on evolutionary models"/>
</dbReference>
<dbReference type="PhylomeDB" id="Q6TGC4"/>
<dbReference type="BioCyc" id="MetaCyc:G66-31585-MONOMER"/>
<dbReference type="BRENDA" id="3.5.3.15">
    <property type="organism ID" value="2681"/>
</dbReference>
<dbReference type="PathwayCommons" id="Q6TGC4"/>
<dbReference type="Reactome" id="R-HSA-3247509">
    <property type="pathway name" value="Chromatin modifying enzymes"/>
</dbReference>
<dbReference type="SignaLink" id="Q6TGC4"/>
<dbReference type="BioGRID-ORCS" id="353238">
    <property type="hits" value="7 hits in 263 CRISPR screens"/>
</dbReference>
<dbReference type="ChiTaRS" id="PADI6">
    <property type="organism name" value="human"/>
</dbReference>
<dbReference type="EvolutionaryTrace" id="Q6TGC4"/>
<dbReference type="GenomeRNAi" id="353238"/>
<dbReference type="Pharos" id="Q6TGC4">
    <property type="development level" value="Tbio"/>
</dbReference>
<dbReference type="PRO" id="PR:Q6TGC4"/>
<dbReference type="Proteomes" id="UP000005640">
    <property type="component" value="Chromosome 1"/>
</dbReference>
<dbReference type="RNAct" id="Q6TGC4">
    <property type="molecule type" value="protein"/>
</dbReference>
<dbReference type="Bgee" id="ENSG00000276747">
    <property type="expression patterns" value="Expressed in male germ line stem cell (sensu Vertebrata) in testis and 6 other cell types or tissues"/>
</dbReference>
<dbReference type="GO" id="GO:0060473">
    <property type="term" value="C:cortical granule"/>
    <property type="evidence" value="ECO:0000250"/>
    <property type="project" value="UniProtKB"/>
</dbReference>
<dbReference type="GO" id="GO:0005737">
    <property type="term" value="C:cytoplasm"/>
    <property type="evidence" value="ECO:0000314"/>
    <property type="project" value="UniProtKB"/>
</dbReference>
<dbReference type="GO" id="GO:0140095">
    <property type="term" value="C:cytoplasmic lattice"/>
    <property type="evidence" value="ECO:0000314"/>
    <property type="project" value="UniProtKB"/>
</dbReference>
<dbReference type="GO" id="GO:0045111">
    <property type="term" value="C:intermediate filament cytoskeleton"/>
    <property type="evidence" value="ECO:0007669"/>
    <property type="project" value="Ensembl"/>
</dbReference>
<dbReference type="GO" id="GO:0005634">
    <property type="term" value="C:nucleus"/>
    <property type="evidence" value="ECO:0000318"/>
    <property type="project" value="GO_Central"/>
</dbReference>
<dbReference type="GO" id="GO:0005509">
    <property type="term" value="F:calcium ion binding"/>
    <property type="evidence" value="ECO:0007669"/>
    <property type="project" value="InterPro"/>
</dbReference>
<dbReference type="GO" id="GO:0042802">
    <property type="term" value="F:identical protein binding"/>
    <property type="evidence" value="ECO:0000314"/>
    <property type="project" value="UniProtKB"/>
</dbReference>
<dbReference type="GO" id="GO:0140094">
    <property type="term" value="F:structural constituent of cytoplasmic lattice"/>
    <property type="evidence" value="ECO:0000314"/>
    <property type="project" value="UniProtKB"/>
</dbReference>
<dbReference type="GO" id="GO:0015631">
    <property type="term" value="F:tubulin binding"/>
    <property type="evidence" value="ECO:0000250"/>
    <property type="project" value="UniProtKB"/>
</dbReference>
<dbReference type="GO" id="GO:0007028">
    <property type="term" value="P:cytoplasm organization"/>
    <property type="evidence" value="ECO:0007669"/>
    <property type="project" value="Ensembl"/>
</dbReference>
<dbReference type="GO" id="GO:0007010">
    <property type="term" value="P:cytoskeleton organization"/>
    <property type="evidence" value="ECO:0007669"/>
    <property type="project" value="Ensembl"/>
</dbReference>
<dbReference type="GO" id="GO:0040016">
    <property type="term" value="P:embryonic cleavage"/>
    <property type="evidence" value="ECO:0000250"/>
    <property type="project" value="UniProtKB"/>
</dbReference>
<dbReference type="GO" id="GO:0044725">
    <property type="term" value="P:epigenetic programming in the zygotic pronuclei"/>
    <property type="evidence" value="ECO:0000250"/>
    <property type="project" value="UniProtKB"/>
</dbReference>
<dbReference type="GO" id="GO:0001701">
    <property type="term" value="P:in utero embryonic development"/>
    <property type="evidence" value="ECO:0007669"/>
    <property type="project" value="Ensembl"/>
</dbReference>
<dbReference type="GO" id="GO:0140089">
    <property type="term" value="P:protein storage"/>
    <property type="evidence" value="ECO:0000314"/>
    <property type="project" value="UniProtKB"/>
</dbReference>
<dbReference type="GO" id="GO:0043143">
    <property type="term" value="P:regulation of translation by machinery localization"/>
    <property type="evidence" value="ECO:0007669"/>
    <property type="project" value="Ensembl"/>
</dbReference>
<dbReference type="CDD" id="cd04214">
    <property type="entry name" value="PAD_N"/>
    <property type="match status" value="1"/>
</dbReference>
<dbReference type="FunFam" id="2.60.40.1700:FF:000002">
    <property type="entry name" value="Peptidyl arginine deiminase 6"/>
    <property type="match status" value="1"/>
</dbReference>
<dbReference type="FunFam" id="2.60.40.1860:FF:000004">
    <property type="entry name" value="Peptidyl arginine deiminase 6"/>
    <property type="match status" value="1"/>
</dbReference>
<dbReference type="FunFam" id="3.75.10.10:FF:000003">
    <property type="entry name" value="Protein-arginine deiminase type-2"/>
    <property type="match status" value="1"/>
</dbReference>
<dbReference type="Gene3D" id="3.75.10.10">
    <property type="entry name" value="L-arginine/glycine Amidinotransferase, Chain A"/>
    <property type="match status" value="1"/>
</dbReference>
<dbReference type="Gene3D" id="2.60.40.1700">
    <property type="entry name" value="Protein-arginine deiminase, central domain"/>
    <property type="match status" value="1"/>
</dbReference>
<dbReference type="Gene3D" id="2.60.40.1860">
    <property type="entry name" value="Protein-arginine deiminase, N-terminal domain"/>
    <property type="match status" value="1"/>
</dbReference>
<dbReference type="InterPro" id="IPR008972">
    <property type="entry name" value="Cupredoxin"/>
</dbReference>
<dbReference type="InterPro" id="IPR004303">
    <property type="entry name" value="PAD"/>
</dbReference>
<dbReference type="InterPro" id="IPR013530">
    <property type="entry name" value="PAD_C"/>
</dbReference>
<dbReference type="InterPro" id="IPR036556">
    <property type="entry name" value="PAD_central_sf"/>
</dbReference>
<dbReference type="InterPro" id="IPR013732">
    <property type="entry name" value="PAD_N"/>
</dbReference>
<dbReference type="InterPro" id="IPR038685">
    <property type="entry name" value="PAD_N_sf"/>
</dbReference>
<dbReference type="InterPro" id="IPR013733">
    <property type="entry name" value="Prot_Arg_deaminase_cen_dom"/>
</dbReference>
<dbReference type="PANTHER" id="PTHR10837">
    <property type="entry name" value="PEPTIDYLARGININE DEIMINASE"/>
    <property type="match status" value="1"/>
</dbReference>
<dbReference type="PANTHER" id="PTHR10837:SF4">
    <property type="entry name" value="PROTEIN-ARGININE DEIMINASE TYPE-6"/>
    <property type="match status" value="1"/>
</dbReference>
<dbReference type="Pfam" id="PF03068">
    <property type="entry name" value="PAD"/>
    <property type="match status" value="1"/>
</dbReference>
<dbReference type="Pfam" id="PF08527">
    <property type="entry name" value="PAD_M"/>
    <property type="match status" value="1"/>
</dbReference>
<dbReference type="Pfam" id="PF08526">
    <property type="entry name" value="PAD_N"/>
    <property type="match status" value="1"/>
</dbReference>
<dbReference type="PIRSF" id="PIRSF001247">
    <property type="entry name" value="Protein-arginine_deiminase"/>
    <property type="match status" value="1"/>
</dbReference>
<dbReference type="SUPFAM" id="SSF49503">
    <property type="entry name" value="Cupredoxins"/>
    <property type="match status" value="1"/>
</dbReference>
<dbReference type="SUPFAM" id="SSF55909">
    <property type="entry name" value="Pentein"/>
    <property type="match status" value="1"/>
</dbReference>
<dbReference type="SUPFAM" id="SSF110083">
    <property type="entry name" value="Peptidylarginine deiminase Pad4, middle domain"/>
    <property type="match status" value="1"/>
</dbReference>
<name>PADI6_HUMAN</name>
<evidence type="ECO:0000250" key="1">
    <source>
        <dbReference type="UniProtKB" id="Q8K3V4"/>
    </source>
</evidence>
<evidence type="ECO:0000269" key="2">
    <source>
    </source>
</evidence>
<evidence type="ECO:0000269" key="3">
    <source>
    </source>
</evidence>
<evidence type="ECO:0000269" key="4">
    <source>
    </source>
</evidence>
<evidence type="ECO:0000269" key="5">
    <source>
    </source>
</evidence>
<evidence type="ECO:0000269" key="6">
    <source>
    </source>
</evidence>
<evidence type="ECO:0000269" key="7">
    <source>
    </source>
</evidence>
<evidence type="ECO:0000269" key="8">
    <source>
    </source>
</evidence>
<evidence type="ECO:0000269" key="9">
    <source>
    </source>
</evidence>
<evidence type="ECO:0000269" key="10">
    <source>
    </source>
</evidence>
<evidence type="ECO:0000269" key="11">
    <source>
    </source>
</evidence>
<evidence type="ECO:0000269" key="12">
    <source>
    </source>
</evidence>
<evidence type="ECO:0000269" key="13">
    <source>
    </source>
</evidence>
<evidence type="ECO:0000269" key="14">
    <source>
    </source>
</evidence>
<evidence type="ECO:0000269" key="15">
    <source>
    </source>
</evidence>
<evidence type="ECO:0000269" key="16">
    <source>
    </source>
</evidence>
<evidence type="ECO:0000269" key="17">
    <source>
    </source>
</evidence>
<evidence type="ECO:0000269" key="18">
    <source>
    </source>
</evidence>
<evidence type="ECO:0000269" key="19">
    <source>
    </source>
</evidence>
<evidence type="ECO:0000303" key="20">
    <source>
    </source>
</evidence>
<evidence type="ECO:0000303" key="21">
    <source>
    </source>
</evidence>
<evidence type="ECO:0000303" key="22">
    <source>
    </source>
</evidence>
<evidence type="ECO:0000305" key="23"/>
<evidence type="ECO:0000312" key="24">
    <source>
        <dbReference type="HGNC" id="HGNC:20449"/>
    </source>
</evidence>
<evidence type="ECO:0007744" key="25">
    <source>
        <dbReference type="PDB" id="8QL0"/>
    </source>
</evidence>
<evidence type="ECO:0007829" key="26">
    <source>
        <dbReference type="PDB" id="8QL0"/>
    </source>
</evidence>